<accession>Q2J830</accession>
<comment type="function">
    <text evidence="1">Involved in transcription antitermination. Required for transcription of ribosomal RNA (rRNA) genes. Binds specifically to the boxA antiterminator sequence of the ribosomal RNA (rrn) operons.</text>
</comment>
<comment type="similarity">
    <text evidence="1">Belongs to the NusB family.</text>
</comment>
<name>NUSB_FRACC</name>
<protein>
    <recommendedName>
        <fullName evidence="1">Transcription antitermination protein NusB</fullName>
    </recommendedName>
    <alternativeName>
        <fullName evidence="1">Antitermination factor NusB</fullName>
    </alternativeName>
</protein>
<organism>
    <name type="scientific">Frankia casuarinae (strain DSM 45818 / CECT 9043 / HFP020203 / CcI3)</name>
    <dbReference type="NCBI Taxonomy" id="106370"/>
    <lineage>
        <taxon>Bacteria</taxon>
        <taxon>Bacillati</taxon>
        <taxon>Actinomycetota</taxon>
        <taxon>Actinomycetes</taxon>
        <taxon>Frankiales</taxon>
        <taxon>Frankiaceae</taxon>
        <taxon>Frankia</taxon>
    </lineage>
</organism>
<reference key="1">
    <citation type="journal article" date="2007" name="Genome Res.">
        <title>Genome characteristics of facultatively symbiotic Frankia sp. strains reflect host range and host plant biogeography.</title>
        <authorList>
            <person name="Normand P."/>
            <person name="Lapierre P."/>
            <person name="Tisa L.S."/>
            <person name="Gogarten J.P."/>
            <person name="Alloisio N."/>
            <person name="Bagnarol E."/>
            <person name="Bassi C.A."/>
            <person name="Berry A.M."/>
            <person name="Bickhart D.M."/>
            <person name="Choisne N."/>
            <person name="Couloux A."/>
            <person name="Cournoyer B."/>
            <person name="Cruveiller S."/>
            <person name="Daubin V."/>
            <person name="Demange N."/>
            <person name="Francino M.P."/>
            <person name="Goltsman E."/>
            <person name="Huang Y."/>
            <person name="Kopp O.R."/>
            <person name="Labarre L."/>
            <person name="Lapidus A."/>
            <person name="Lavire C."/>
            <person name="Marechal J."/>
            <person name="Martinez M."/>
            <person name="Mastronunzio J.E."/>
            <person name="Mullin B.C."/>
            <person name="Niemann J."/>
            <person name="Pujic P."/>
            <person name="Rawnsley T."/>
            <person name="Rouy Z."/>
            <person name="Schenowitz C."/>
            <person name="Sellstedt A."/>
            <person name="Tavares F."/>
            <person name="Tomkins J.P."/>
            <person name="Vallenet D."/>
            <person name="Valverde C."/>
            <person name="Wall L.G."/>
            <person name="Wang Y."/>
            <person name="Medigue C."/>
            <person name="Benson D.R."/>
        </authorList>
    </citation>
    <scope>NUCLEOTIDE SEQUENCE [LARGE SCALE GENOMIC DNA]</scope>
    <source>
        <strain>DSM 45818 / CECT 9043 / HFP020203 / CcI3</strain>
    </source>
</reference>
<proteinExistence type="inferred from homology"/>
<dbReference type="EMBL" id="CP000249">
    <property type="protein sequence ID" value="ABD12562.1"/>
    <property type="molecule type" value="Genomic_DNA"/>
</dbReference>
<dbReference type="RefSeq" id="WP_011437590.1">
    <property type="nucleotide sequence ID" value="NZ_LRTJ01000064.1"/>
</dbReference>
<dbReference type="SMR" id="Q2J830"/>
<dbReference type="STRING" id="106370.Francci3_3205"/>
<dbReference type="KEGG" id="fra:Francci3_3205"/>
<dbReference type="eggNOG" id="COG0781">
    <property type="taxonomic scope" value="Bacteria"/>
</dbReference>
<dbReference type="HOGENOM" id="CLU_087843_2_3_11"/>
<dbReference type="PhylomeDB" id="Q2J830"/>
<dbReference type="Proteomes" id="UP000001937">
    <property type="component" value="Chromosome"/>
</dbReference>
<dbReference type="GO" id="GO:0005829">
    <property type="term" value="C:cytosol"/>
    <property type="evidence" value="ECO:0007669"/>
    <property type="project" value="TreeGrafter"/>
</dbReference>
<dbReference type="GO" id="GO:0003723">
    <property type="term" value="F:RNA binding"/>
    <property type="evidence" value="ECO:0007669"/>
    <property type="project" value="UniProtKB-UniRule"/>
</dbReference>
<dbReference type="GO" id="GO:0006353">
    <property type="term" value="P:DNA-templated transcription termination"/>
    <property type="evidence" value="ECO:0007669"/>
    <property type="project" value="UniProtKB-UniRule"/>
</dbReference>
<dbReference type="GO" id="GO:0031564">
    <property type="term" value="P:transcription antitermination"/>
    <property type="evidence" value="ECO:0007669"/>
    <property type="project" value="UniProtKB-KW"/>
</dbReference>
<dbReference type="Gene3D" id="1.10.940.10">
    <property type="entry name" value="NusB-like"/>
    <property type="match status" value="1"/>
</dbReference>
<dbReference type="HAMAP" id="MF_00073">
    <property type="entry name" value="NusB"/>
    <property type="match status" value="1"/>
</dbReference>
<dbReference type="InterPro" id="IPR035926">
    <property type="entry name" value="NusB-like_sf"/>
</dbReference>
<dbReference type="InterPro" id="IPR011605">
    <property type="entry name" value="NusB_fam"/>
</dbReference>
<dbReference type="InterPro" id="IPR006027">
    <property type="entry name" value="NusB_RsmB_TIM44"/>
</dbReference>
<dbReference type="NCBIfam" id="TIGR01951">
    <property type="entry name" value="nusB"/>
    <property type="match status" value="1"/>
</dbReference>
<dbReference type="PANTHER" id="PTHR11078:SF3">
    <property type="entry name" value="ANTITERMINATION NUSB DOMAIN-CONTAINING PROTEIN"/>
    <property type="match status" value="1"/>
</dbReference>
<dbReference type="PANTHER" id="PTHR11078">
    <property type="entry name" value="N UTILIZATION SUBSTANCE PROTEIN B-RELATED"/>
    <property type="match status" value="1"/>
</dbReference>
<dbReference type="Pfam" id="PF01029">
    <property type="entry name" value="NusB"/>
    <property type="match status" value="1"/>
</dbReference>
<dbReference type="SUPFAM" id="SSF48013">
    <property type="entry name" value="NusB-like"/>
    <property type="match status" value="1"/>
</dbReference>
<gene>
    <name evidence="1" type="primary">nusB</name>
    <name type="ordered locus">Francci3_3205</name>
</gene>
<sequence>MRASAVPEILAARLAQSDPPVSEYAVELVEGVVERRGEIDERIARYAEGWTLERMPPVDRNILRIAVLELLWRPDVPDRVAIDEAVELAKNLSTHRSPAFVNGLLASLVEGKGLATPAESTGRGSAVDSIPGQPS</sequence>
<evidence type="ECO:0000255" key="1">
    <source>
        <dbReference type="HAMAP-Rule" id="MF_00073"/>
    </source>
</evidence>
<evidence type="ECO:0000256" key="2">
    <source>
        <dbReference type="SAM" id="MobiDB-lite"/>
    </source>
</evidence>
<feature type="chain" id="PRO_0000265522" description="Transcription antitermination protein NusB">
    <location>
        <begin position="1"/>
        <end position="135"/>
    </location>
</feature>
<feature type="region of interest" description="Disordered" evidence="2">
    <location>
        <begin position="115"/>
        <end position="135"/>
    </location>
</feature>
<keyword id="KW-1185">Reference proteome</keyword>
<keyword id="KW-0694">RNA-binding</keyword>
<keyword id="KW-0804">Transcription</keyword>
<keyword id="KW-0889">Transcription antitermination</keyword>
<keyword id="KW-0805">Transcription regulation</keyword>